<gene>
    <name type="primary">HSP150</name>
    <name type="synonym">CCW7</name>
    <name type="synonym">ORE1</name>
    <name type="synonym">PIR2</name>
    <name type="ordered locus">YJL159W</name>
    <name type="ORF">J0558</name>
</gene>
<proteinExistence type="evidence at protein level"/>
<organism>
    <name type="scientific">Saccharomyces cerevisiae (strain ATCC 204508 / S288c)</name>
    <name type="common">Baker's yeast</name>
    <dbReference type="NCBI Taxonomy" id="559292"/>
    <lineage>
        <taxon>Eukaryota</taxon>
        <taxon>Fungi</taxon>
        <taxon>Dikarya</taxon>
        <taxon>Ascomycota</taxon>
        <taxon>Saccharomycotina</taxon>
        <taxon>Saccharomycetes</taxon>
        <taxon>Saccharomycetales</taxon>
        <taxon>Saccharomycetaceae</taxon>
        <taxon>Saccharomyces</taxon>
    </lineage>
</organism>
<reference key="1">
    <citation type="journal article" date="1992" name="Proc. Natl. Acad. Sci. U.S.A.">
        <title>A heat shock gene from Saccharomyces cerevisiae encoding a secretory glycoprotein.</title>
        <authorList>
            <person name="Russo P."/>
            <person name="Kalkkinen N."/>
            <person name="Sareneva H."/>
            <person name="Paakkola J."/>
            <person name="Makarow M."/>
        </authorList>
    </citation>
    <scope>NUCLEOTIDE SEQUENCE</scope>
    <scope>PROTEIN SEQUENCE OF 19-39; 73-94; 114-132; 243-261; 346-370 AND 390-412</scope>
</reference>
<reference key="2">
    <citation type="journal article" date="1992" name="Proc. Natl. Acad. Sci. U.S.A.">
        <authorList>
            <person name="Russo P."/>
            <person name="Kalkkinen N."/>
            <person name="Sareneva H."/>
            <person name="Paakkola J."/>
            <person name="Makarow M."/>
        </authorList>
    </citation>
    <scope>ERRATUM OF PUBMED:1570286</scope>
    <scope>SEQUENCE REVISION</scope>
</reference>
<reference key="3">
    <citation type="journal article" date="1993" name="Yeast">
        <title>Three yeast genes, PIR1, PIR2 and PIR3, containing internal tandem repeats, are related to each other, and PIR1 and PIR2 are required for tolerance to heat shock.</title>
        <authorList>
            <person name="Toh-e A."/>
            <person name="Yasunaga S."/>
            <person name="Nisogi H."/>
            <person name="Tanaka K."/>
            <person name="Oguchi T."/>
            <person name="Matsui Y."/>
        </authorList>
    </citation>
    <scope>NUCLEOTIDE SEQUENCE [GENOMIC DNA]</scope>
    <source>
        <strain>RAY-3AD</strain>
    </source>
</reference>
<reference key="4">
    <citation type="journal article" date="1996" name="EMBO J.">
        <title>Complete nucleotide sequence of Saccharomyces cerevisiae chromosome X.</title>
        <authorList>
            <person name="Galibert F."/>
            <person name="Alexandraki D."/>
            <person name="Baur A."/>
            <person name="Boles E."/>
            <person name="Chalwatzis N."/>
            <person name="Chuat J.-C."/>
            <person name="Coster F."/>
            <person name="Cziepluch C."/>
            <person name="de Haan M."/>
            <person name="Domdey H."/>
            <person name="Durand P."/>
            <person name="Entian K.-D."/>
            <person name="Gatius M."/>
            <person name="Goffeau A."/>
            <person name="Grivell L.A."/>
            <person name="Hennemann A."/>
            <person name="Herbert C.J."/>
            <person name="Heumann K."/>
            <person name="Hilger F."/>
            <person name="Hollenberg C.P."/>
            <person name="Huang M.-E."/>
            <person name="Jacq C."/>
            <person name="Jauniaux J.-C."/>
            <person name="Katsoulou C."/>
            <person name="Kirchrath L."/>
            <person name="Kleine K."/>
            <person name="Kordes E."/>
            <person name="Koetter P."/>
            <person name="Liebl S."/>
            <person name="Louis E.J."/>
            <person name="Manus V."/>
            <person name="Mewes H.-W."/>
            <person name="Miosga T."/>
            <person name="Obermaier B."/>
            <person name="Perea J."/>
            <person name="Pohl T.M."/>
            <person name="Portetelle D."/>
            <person name="Pujol A."/>
            <person name="Purnelle B."/>
            <person name="Ramezani Rad M."/>
            <person name="Rasmussen S.W."/>
            <person name="Rose M."/>
            <person name="Rossau R."/>
            <person name="Schaaff-Gerstenschlaeger I."/>
            <person name="Smits P.H.M."/>
            <person name="Scarcez T."/>
            <person name="Soriano N."/>
            <person name="To Van D."/>
            <person name="Tzermia M."/>
            <person name="Van Broekhoven A."/>
            <person name="Vandenbol M."/>
            <person name="Wedler H."/>
            <person name="von Wettstein D."/>
            <person name="Wambutt R."/>
            <person name="Zagulski M."/>
            <person name="Zollner A."/>
            <person name="Karpfinger-Hartl L."/>
        </authorList>
    </citation>
    <scope>NUCLEOTIDE SEQUENCE [LARGE SCALE GENOMIC DNA]</scope>
    <source>
        <strain>ATCC 204508 / S288c</strain>
    </source>
</reference>
<reference key="5">
    <citation type="journal article" date="2014" name="G3 (Bethesda)">
        <title>The reference genome sequence of Saccharomyces cerevisiae: Then and now.</title>
        <authorList>
            <person name="Engel S.R."/>
            <person name="Dietrich F.S."/>
            <person name="Fisk D.G."/>
            <person name="Binkley G."/>
            <person name="Balakrishnan R."/>
            <person name="Costanzo M.C."/>
            <person name="Dwight S.S."/>
            <person name="Hitz B.C."/>
            <person name="Karra K."/>
            <person name="Nash R.S."/>
            <person name="Weng S."/>
            <person name="Wong E.D."/>
            <person name="Lloyd P."/>
            <person name="Skrzypek M.S."/>
            <person name="Miyasato S.R."/>
            <person name="Simison M."/>
            <person name="Cherry J.M."/>
        </authorList>
    </citation>
    <scope>GENOME REANNOTATION</scope>
    <source>
        <strain>ATCC 204508 / S288c</strain>
    </source>
</reference>
<reference key="6">
    <citation type="journal article" date="1997" name="Yeast">
        <title>Specific labelling of cell wall proteins by biotinylation. Identification of four covalently linked O-mannosylated proteins of Saccharomyces cerevisiae.</title>
        <authorList>
            <person name="Mrsa V."/>
            <person name="Seidl T."/>
            <person name="Gentzsch M."/>
            <person name="Tanner W."/>
        </authorList>
    </citation>
    <scope>PROTEIN SEQUENCE OF 19-29 AND 73-87</scope>
    <scope>CLEAVAGE BY KEX2</scope>
    <scope>GLYCOSYLATION</scope>
    <scope>SUBCELLULAR LOCATION</scope>
</reference>
<reference key="7">
    <citation type="journal article" date="2008" name="FEMS Yeast Res.">
        <title>Characterization of Ccw7p cell wall proteins and the encoding genes of Saccharomyces cerevisiae wine yeast strains: relevance for flor formation.</title>
        <authorList>
            <person name="Kovacs M."/>
            <person name="Stuparevic I."/>
            <person name="Mrsa V."/>
            <person name="Maraz A."/>
        </authorList>
    </citation>
    <scope>NUCLEOTIDE SEQUENCE [GENOMIC DNA] OF 33-393</scope>
    <scope>PROTEIN SEQUENCE OF 73-84</scope>
    <scope>VARIANTS SER-96; 116-ALA--THR-163 DEL; ILE-175; ALA-ALA-THR-THR-THR-ALA-SER-VAL-SER-THR-LYS-SER-SER-ALA-ALA-ALA-VAL-SER-GLN-ILE-GLY-ASP-GLY-GLN-ILE-GLN-ALA-THR-THR-LYS-THR-THR-ALA-ALA-ALA-VAL-SER-GLN-ILE-GLY-ASP-GLY-GLN-ILE-GLN-176 INS; ILE-199; 226-ALA--THR-244 DEL AND SER-297</scope>
    <source>
        <strain>B1</strain>
        <strain>TD04/1a</strain>
        <strain>TD04/1b</strain>
    </source>
</reference>
<reference key="8">
    <citation type="journal article" date="1999" name="Yeast">
        <title>Two-dimensional analysis of proteins secreted by Saccharomyces cerevisiae regenerating protoplasts: a novel approach to study the cell wall.</title>
        <authorList>
            <person name="Pardo M."/>
            <person name="Monteoliva L."/>
            <person name="Pla J."/>
            <person name="Sanchez M."/>
            <person name="Gil C."/>
            <person name="Nombela C."/>
        </authorList>
    </citation>
    <scope>PROTEIN SEQUENCE OF 73-82</scope>
</reference>
<reference key="9">
    <citation type="journal article" date="2004" name="FEMS Yeast Res.">
        <title>Minisatellites in Saccharomyces cerevisiae genes encoding cell wall proteins: a new way towards wine strain characterisation.</title>
        <authorList>
            <person name="Marinangeli P."/>
            <person name="Angelozzi D."/>
            <person name="Ciani M."/>
            <person name="Clementi F."/>
            <person name="Mannazzu I."/>
        </authorList>
    </citation>
    <scope>NUCLEOTIDE SEQUENCE [GENOMIC DNA] OF 100-366</scope>
    <source>
        <strain>ATCC 204508 / S288c</strain>
    </source>
</reference>
<reference key="10">
    <citation type="journal article" date="2001" name="Yeast">
        <title>YJL159w does encode Pir2/Hsp150.</title>
        <authorList>
            <person name="Moukadiri I."/>
            <person name="Zueco J."/>
        </authorList>
    </citation>
    <scope>NUCLEOTIDE SEQUENCE [GENOMIC DNA] OF 267-413</scope>
    <source>
        <strain>ATCC 204508 / S288c</strain>
    </source>
</reference>
<reference key="11">
    <citation type="journal article" date="2003" name="Genome Biol.">
        <title>Reinvestigation of the Saccharomyces cerevisiae genome annotation by comparison to the genome of a related fungus: Ashbya gossypii.</title>
        <authorList>
            <person name="Brachat S."/>
            <person name="Dietrich F.S."/>
            <person name="Voegeli S."/>
            <person name="Zhang Z."/>
            <person name="Stuart L."/>
            <person name="Lerch A."/>
            <person name="Gates K."/>
            <person name="Gaffney T.D."/>
            <person name="Philippsen P."/>
        </authorList>
    </citation>
    <scope>NUCLEOTIDE SEQUENCE [GENOMIC DNA] OF 289-406</scope>
    <source>
        <strain>ATCC 204511 / S288c / AB972</strain>
    </source>
</reference>
<reference key="12">
    <citation type="journal article" date="2000" name="Electrophoresis">
        <title>A proteomic approach for the study of Saccharomyces cerevisiae cell wall biogenesis.</title>
        <authorList>
            <person name="Pardo M."/>
            <person name="Ward M."/>
            <person name="Bains S."/>
            <person name="Molina M."/>
            <person name="Blackstock W."/>
            <person name="Gil C."/>
            <person name="Nombela C."/>
        </authorList>
    </citation>
    <scope>PROTEIN SEQUENCE OF 318-327 AND 338-345</scope>
</reference>
<reference key="13">
    <citation type="journal article" date="1997" name="Proc. Natl. Acad. Sci. U.S.A.">
        <title>Stress proteins on the yeast cell surface determine resistance to osmotin, a plant antifungal protein.</title>
        <authorList>
            <person name="Yun D.-J."/>
            <person name="Zhao Y."/>
            <person name="Pardo J.M."/>
            <person name="Narasimhan M.L."/>
            <person name="Damsz B."/>
            <person name="Lee H."/>
            <person name="Abad L.R."/>
            <person name="D'Urzo M.P."/>
            <person name="Hasegawa P.M."/>
            <person name="Bressan R.A."/>
        </authorList>
    </citation>
    <scope>FUNCTION</scope>
    <scope>SUBCELLULAR LOCATION</scope>
    <scope>INDUCTION</scope>
</reference>
<reference key="14">
    <citation type="journal article" date="1999" name="Mol. Microbiol.">
        <title>The contribution of the O-glycosylated protein Pir2p/Hsp150 to the construction of the yeast cell wall in wild-type cells and beta 1,6-glucan-deficient mutants.</title>
        <authorList>
            <person name="Kapteyn J.C."/>
            <person name="Van Egmond P."/>
            <person name="Sievi E."/>
            <person name="Van Den Ende H."/>
            <person name="Makarow M."/>
            <person name="Klis F.M."/>
        </authorList>
    </citation>
    <scope>FUNCTION</scope>
    <scope>SUBCELLULAR LOCATION</scope>
</reference>
<reference key="15">
    <citation type="journal article" date="1999" name="Mol. Microbiol.">
        <title>Genome-wide analysis of gene expression regulated by the yeast cell wall integrity signalling pathway.</title>
        <authorList>
            <person name="Jung U.S."/>
            <person name="Levin D.E."/>
        </authorList>
    </citation>
    <scope>INDUCTION</scope>
</reference>
<reference key="16">
    <citation type="journal article" date="1999" name="Yeast">
        <title>Role of NaOH-extractable cell wall proteins Ccw5p, Ccw6p, Ccw7p and Ccw8p (members of the Pir protein family) in stability of the Saccharomyces cerevisiae cell wall.</title>
        <authorList>
            <person name="Mrsa V."/>
            <person name="Tanner W."/>
        </authorList>
    </citation>
    <scope>FUNCTION</scope>
</reference>
<reference key="17">
    <citation type="journal article" date="2001" name="Mol. Microbiol.">
        <title>Overlapping and distinct roles of the duplicated yeast transcription factors Ace2p and Swi5p.</title>
        <authorList>
            <person name="Doolin M.-T."/>
            <person name="Johnson A.L."/>
            <person name="Johnston L.H."/>
            <person name="Butler G."/>
        </authorList>
    </citation>
    <scope>INDUCTION</scope>
</reference>
<reference key="18">
    <citation type="journal article" date="2003" name="Nature">
        <title>Global analysis of protein expression in yeast.</title>
        <authorList>
            <person name="Ghaemmaghami S."/>
            <person name="Huh W.-K."/>
            <person name="Bower K."/>
            <person name="Howson R.W."/>
            <person name="Belle A."/>
            <person name="Dephoure N."/>
            <person name="O'Shea E.K."/>
            <person name="Weissman J.S."/>
        </authorList>
    </citation>
    <scope>LEVEL OF PROTEIN EXPRESSION [LARGE SCALE ANALYSIS]</scope>
</reference>
<reference key="19">
    <citation type="journal article" date="2004" name="Microbiology">
        <title>Increased mortality of Saccharomyces cerevisiae cell wall protein mutants.</title>
        <authorList>
            <person name="Teparic R."/>
            <person name="Stuparevic I."/>
            <person name="Mrsa V."/>
        </authorList>
    </citation>
    <scope>FUNCTION</scope>
</reference>
<reference key="20">
    <citation type="journal article" date="2004" name="Yeast">
        <title>Characterization of the transcriptional response to cell wall stress in Saccharomyces cerevisiae.</title>
        <authorList>
            <person name="Boorsma A."/>
            <person name="de Nobel H."/>
            <person name="ter Riet B."/>
            <person name="Bargmann B."/>
            <person name="Brul S."/>
            <person name="Hellingwerf K.J."/>
            <person name="Klis F.M."/>
        </authorList>
    </citation>
    <scope>INDUCTION</scope>
</reference>
<reference key="21">
    <citation type="journal article" date="2005" name="J. Biol. Chem.">
        <title>Comprehensive proteomic analysis of Saccharomyces cerevisiae cell walls: identification of proteins covalently attached via glycosylphosphatidylinositol remnants or mild alkali-sensitive linkages.</title>
        <authorList>
            <person name="Yin Q.Y."/>
            <person name="de Groot P.W.J."/>
            <person name="Dekker H.L."/>
            <person name="de Jong L."/>
            <person name="Klis F.M."/>
            <person name="de Koster C.G."/>
        </authorList>
    </citation>
    <scope>SUBCELLULAR LOCATION</scope>
    <scope>IDENTIFICATION BY MASS SPECTROMETRY</scope>
</reference>
<reference key="22">
    <citation type="journal article" date="2005" name="Nat. Genet.">
        <title>Intragenic tandem repeats generate functional variability.</title>
        <authorList>
            <person name="Verstrepen K.J."/>
            <person name="Jansen A."/>
            <person name="Lewitter F."/>
            <person name="Fink G.R."/>
        </authorList>
    </citation>
    <scope>REPEATS</scope>
</reference>
<reference key="23">
    <citation type="journal article" date="2007" name="FEMS Yeast Res.">
        <title>Mass spectrometric quantitation of covalently bound cell wall proteins in Saccharomyces cerevisiae.</title>
        <authorList>
            <person name="Yin Q.Y."/>
            <person name="de Groot P.W.J."/>
            <person name="de Jong L."/>
            <person name="Klis F.M."/>
            <person name="de Koster C.G."/>
        </authorList>
    </citation>
    <scope>INDUCTION</scope>
</reference>
<sequence>MQYKKTLVASALAATTLAAYAPSEPWSTLTPTATYSGGVTDYASTFGIAVQPISTTSSASSAATTASSKAKRAASQIGDGQVQAATTTASVSTKSTAAAVSQIGDGQIQATTKTTAAAVSQIGDGQIQATTKTTSAKTTAAAVSQISDGQIQATTTTLAPKSTAAAVSQIGDGQVQATTTTLAPKSTAAAVSQIGDGQVQATTKTTAAAVSQIGDGQVQATTKTTAAAVSQIGDGQVQATTKTTAAAVSQIGDGQVQATTKTTAAAVSQITDGQVQATTKTTQAASQVSDGQVQATTATSASAAATSTDPVDAVSCKTSGTLEMNLKGGILTDGKGRIGSIVANRQFQFDGPPPQAGAIYAAGWSITPDGNLAIGDNDVFYQCLSGTFYNLYDEHIGSQCTPVHLEAIDLIDC</sequence>
<comment type="function">
    <text evidence="3 5 10 16">Component of the outer cell wall layer. Required for stability of the cell wall and for optimal growth. Required for resistance against several antifungal and cell wall-perturbing agents and for tolerance to heat shock.</text>
</comment>
<comment type="subcellular location">
    <subcellularLocation>
        <location evidence="3 12 16 17">Secreted</location>
        <location evidence="3 12 16 17">Cell wall</location>
    </subcellularLocation>
    <text>Covalently attached to the cell wall.</text>
</comment>
<comment type="induction">
    <text evidence="6 7 9 14 16">Positively regulated by signaling through MPK1 in response to cell wall perturbation. Induced by heat shock and nitrogen starvation. Expression is also regulated by the ACE2 and SWI5 transcription factors.</text>
</comment>
<comment type="domain">
    <text evidence="1">The PIR1/2/3 repeats are required for the covalent linkage to the cell wall (By similarity). Their number varies among different strains of S.cerevisiae.</text>
</comment>
<comment type="PTM">
    <text evidence="1">Covalently linked to beta-1,3-glucan of the inner cell wall layer via an alkali-sensitive ester linkage between the gamma-carboxyl group of glutamic acids, arising from specific glutamines within the PIR1/2/3 repeats, and hydroxyl groups of glucoses of beta-1,3-glucan chains.</text>
</comment>
<comment type="PTM">
    <text evidence="17">The propeptide is cleaved off in the late Golgi. While both peptides are secreted, only a fraction of the mature glycoprotein is incorporated into the cell wall.</text>
</comment>
<comment type="PTM">
    <text evidence="17">O-glycosylated. Extensively O-mannosylated.</text>
</comment>
<comment type="miscellaneous">
    <text evidence="8">Present with 14600 molecules/cell in log phase SD medium.</text>
</comment>
<comment type="similarity">
    <text evidence="18">Belongs to the PIR protein family.</text>
</comment>
<comment type="sequence caution" evidence="18">
    <conflict type="erroneous gene model prediction">
        <sequence resource="EMBL-CDS" id="CAA89454"/>
    </conflict>
</comment>
<keyword id="KW-0134">Cell wall</keyword>
<keyword id="KW-0961">Cell wall biogenesis/degradation</keyword>
<keyword id="KW-0165">Cleavage on pair of basic residues</keyword>
<keyword id="KW-0903">Direct protein sequencing</keyword>
<keyword id="KW-0325">Glycoprotein</keyword>
<keyword id="KW-1185">Reference proteome</keyword>
<keyword id="KW-0677">Repeat</keyword>
<keyword id="KW-0964">Secreted</keyword>
<keyword id="KW-0732">Signal</keyword>
<keyword id="KW-0346">Stress response</keyword>
<name>HS150_YEAST</name>
<accession>P32478</accession>
<accession>B6RI02</accession>
<accession>B6RI03</accession>
<accession>B6RI04</accession>
<accession>D6VW28</accession>
<accession>P47000</accession>
<accession>Q03179</accession>
<accession>Q6VXX4</accession>
<accession>Q86ZT2</accession>
<dbReference type="EMBL" id="M88698">
    <property type="protein sequence ID" value="AAA17683.1"/>
    <property type="molecule type" value="Unassigned_DNA"/>
</dbReference>
<dbReference type="EMBL" id="S45000">
    <property type="protein sequence ID" value="AAB23364.1"/>
    <property type="molecule type" value="Genomic_DNA"/>
</dbReference>
<dbReference type="EMBL" id="D13741">
    <property type="protein sequence ID" value="BAA02886.1"/>
    <property type="molecule type" value="Genomic_DNA"/>
</dbReference>
<dbReference type="EMBL" id="Z49434">
    <property type="protein sequence ID" value="CAA89454.1"/>
    <property type="status" value="ALT_SEQ"/>
    <property type="molecule type" value="Genomic_DNA"/>
</dbReference>
<dbReference type="EMBL" id="EU220722">
    <property type="protein sequence ID" value="ABY67720.1"/>
    <property type="molecule type" value="Genomic_DNA"/>
</dbReference>
<dbReference type="EMBL" id="EU220723">
    <property type="protein sequence ID" value="ABY67721.1"/>
    <property type="molecule type" value="Genomic_DNA"/>
</dbReference>
<dbReference type="EMBL" id="EU220724">
    <property type="protein sequence ID" value="ABY67722.1"/>
    <property type="molecule type" value="Genomic_DNA"/>
</dbReference>
<dbReference type="EMBL" id="AY321583">
    <property type="protein sequence ID" value="AAQ83898.1"/>
    <property type="molecule type" value="Genomic_DNA"/>
</dbReference>
<dbReference type="EMBL" id="AY260881">
    <property type="protein sequence ID" value="AAP21749.1"/>
    <property type="molecule type" value="Genomic_DNA"/>
</dbReference>
<dbReference type="EMBL" id="BK006943">
    <property type="protein sequence ID" value="DAA08644.1"/>
    <property type="molecule type" value="Genomic_DNA"/>
</dbReference>
<dbReference type="PIR" id="A46183">
    <property type="entry name" value="A46183"/>
</dbReference>
<dbReference type="PIR" id="S56942">
    <property type="entry name" value="S56942"/>
</dbReference>
<dbReference type="RefSeq" id="NP_012376.3">
    <property type="nucleotide sequence ID" value="NM_001181592.1"/>
</dbReference>
<dbReference type="BioGRID" id="33601">
    <property type="interactions" value="108"/>
</dbReference>
<dbReference type="DIP" id="DIP-2035N"/>
<dbReference type="FunCoup" id="P32478">
    <property type="interactions" value="93"/>
</dbReference>
<dbReference type="IntAct" id="P32478">
    <property type="interactions" value="3"/>
</dbReference>
<dbReference type="MINT" id="P32478"/>
<dbReference type="STRING" id="4932.YJL159W"/>
<dbReference type="iPTMnet" id="P32478"/>
<dbReference type="PaxDb" id="4932-YJL159W"/>
<dbReference type="PeptideAtlas" id="P32478"/>
<dbReference type="EnsemblFungi" id="YJL159W_mRNA">
    <property type="protein sequence ID" value="YJL159W"/>
    <property type="gene ID" value="YJL159W"/>
</dbReference>
<dbReference type="GeneID" id="853281"/>
<dbReference type="KEGG" id="sce:YJL159W"/>
<dbReference type="AGR" id="SGD:S000003695"/>
<dbReference type="SGD" id="S000003695">
    <property type="gene designation" value="HSP150"/>
</dbReference>
<dbReference type="VEuPathDB" id="FungiDB:YJL159W"/>
<dbReference type="eggNOG" id="ENOG502QQD8">
    <property type="taxonomic scope" value="Eukaryota"/>
</dbReference>
<dbReference type="GeneTree" id="ENSGT00940000176350"/>
<dbReference type="HOGENOM" id="CLU_039662_0_0_1"/>
<dbReference type="InParanoid" id="P32478"/>
<dbReference type="OMA" id="IQHQTAK"/>
<dbReference type="OrthoDB" id="5415592at2759"/>
<dbReference type="BioCyc" id="YEAST:G3O-31599-MONOMER"/>
<dbReference type="BioGRID-ORCS" id="853281">
    <property type="hits" value="4 hits in 10 CRISPR screens"/>
</dbReference>
<dbReference type="PRO" id="PR:P32478"/>
<dbReference type="Proteomes" id="UP000002311">
    <property type="component" value="Chromosome X"/>
</dbReference>
<dbReference type="RNAct" id="P32478">
    <property type="molecule type" value="protein"/>
</dbReference>
<dbReference type="GO" id="GO:0005621">
    <property type="term" value="C:cellular bud scar"/>
    <property type="evidence" value="ECO:0000314"/>
    <property type="project" value="SGD"/>
</dbReference>
<dbReference type="GO" id="GO:0005829">
    <property type="term" value="C:cytosol"/>
    <property type="evidence" value="ECO:0007005"/>
    <property type="project" value="SGD"/>
</dbReference>
<dbReference type="GO" id="GO:0005576">
    <property type="term" value="C:extracellular region"/>
    <property type="evidence" value="ECO:0000314"/>
    <property type="project" value="SGD"/>
</dbReference>
<dbReference type="GO" id="GO:0009277">
    <property type="term" value="C:fungal-type cell wall"/>
    <property type="evidence" value="ECO:0000314"/>
    <property type="project" value="SGD"/>
</dbReference>
<dbReference type="GO" id="GO:0016887">
    <property type="term" value="F:ATP hydrolysis activity"/>
    <property type="evidence" value="ECO:0000314"/>
    <property type="project" value="SGD"/>
</dbReference>
<dbReference type="GO" id="GO:0005199">
    <property type="term" value="F:structural constituent of cell wall"/>
    <property type="evidence" value="ECO:0000314"/>
    <property type="project" value="SGD"/>
</dbReference>
<dbReference type="GO" id="GO:0031505">
    <property type="term" value="P:fungal-type cell wall organization"/>
    <property type="evidence" value="ECO:0000315"/>
    <property type="project" value="SGD"/>
</dbReference>
<dbReference type="InterPro" id="IPR054508">
    <property type="entry name" value="PIR1-like_C"/>
</dbReference>
<dbReference type="InterPro" id="IPR051153">
    <property type="entry name" value="Yeast_CWMannoprotein_PIR"/>
</dbReference>
<dbReference type="InterPro" id="IPR000420">
    <property type="entry name" value="Yeast_PIR_rpt"/>
</dbReference>
<dbReference type="PANTHER" id="PTHR47254">
    <property type="entry name" value="CELL WALL MANNOPROTEIN CIS3-RELATED"/>
    <property type="match status" value="1"/>
</dbReference>
<dbReference type="PANTHER" id="PTHR47254:SF1">
    <property type="entry name" value="CELL WALL MANNOPROTEIN CIS3-RELATED"/>
    <property type="match status" value="1"/>
</dbReference>
<dbReference type="Pfam" id="PF00399">
    <property type="entry name" value="PIR"/>
    <property type="match status" value="11"/>
</dbReference>
<dbReference type="Pfam" id="PF22799">
    <property type="entry name" value="PIR1-like_C"/>
    <property type="match status" value="1"/>
</dbReference>
<dbReference type="PROSITE" id="PS00929">
    <property type="entry name" value="PIR_REPEAT_1"/>
    <property type="match status" value="11"/>
</dbReference>
<dbReference type="PROSITE" id="PS50256">
    <property type="entry name" value="PIR_REPEAT_2"/>
    <property type="match status" value="11"/>
</dbReference>
<evidence type="ECO:0000250" key="1"/>
<evidence type="ECO:0000255" key="2">
    <source>
        <dbReference type="PROSITE-ProRule" id="PRU00149"/>
    </source>
</evidence>
<evidence type="ECO:0000269" key="3">
    <source>
    </source>
</evidence>
<evidence type="ECO:0000269" key="4">
    <source>
    </source>
</evidence>
<evidence type="ECO:0000269" key="5">
    <source>
    </source>
</evidence>
<evidence type="ECO:0000269" key="6">
    <source>
    </source>
</evidence>
<evidence type="ECO:0000269" key="7">
    <source>
    </source>
</evidence>
<evidence type="ECO:0000269" key="8">
    <source>
    </source>
</evidence>
<evidence type="ECO:0000269" key="9">
    <source>
    </source>
</evidence>
<evidence type="ECO:0000269" key="10">
    <source>
    </source>
</evidence>
<evidence type="ECO:0000269" key="11">
    <source>
    </source>
</evidence>
<evidence type="ECO:0000269" key="12">
    <source>
    </source>
</evidence>
<evidence type="ECO:0000269" key="13">
    <source>
    </source>
</evidence>
<evidence type="ECO:0000269" key="14">
    <source>
    </source>
</evidence>
<evidence type="ECO:0000269" key="15">
    <source>
    </source>
</evidence>
<evidence type="ECO:0000269" key="16">
    <source>
    </source>
</evidence>
<evidence type="ECO:0000269" key="17">
    <source>
    </source>
</evidence>
<evidence type="ECO:0000305" key="18"/>
<protein>
    <recommendedName>
        <fullName>Cell wall mannoprotein HSP150</fullName>
    </recommendedName>
    <alternativeName>
        <fullName>150 kDa heat shock glycoprotein</fullName>
    </alternativeName>
    <alternativeName>
        <fullName>Covalently-linked cell wall protein 7</fullName>
    </alternativeName>
    <alternativeName>
        <fullName>Protein with internal repeats 2</fullName>
    </alternativeName>
</protein>
<feature type="signal peptide" evidence="11 17">
    <location>
        <begin position="1"/>
        <end position="18"/>
    </location>
</feature>
<feature type="propeptide" id="PRO_0000033260" evidence="4 11 15 17">
    <location>
        <begin position="19"/>
        <end position="72"/>
    </location>
</feature>
<feature type="chain" id="PRO_0000033261" description="Cell wall mannoprotein HSP150">
    <location>
        <begin position="73"/>
        <end position="413"/>
    </location>
</feature>
<feature type="repeat" description="PIR1/2/3 1" evidence="2 13">
    <location>
        <begin position="73"/>
        <end position="89"/>
    </location>
</feature>
<feature type="repeat" description="PIR1/2/3 2" evidence="2 13">
    <location>
        <begin position="97"/>
        <end position="115"/>
    </location>
</feature>
<feature type="repeat" description="PIR1/2/3 3" evidence="2 13">
    <location>
        <begin position="116"/>
        <end position="134"/>
    </location>
</feature>
<feature type="repeat" description="PIR1/2/3 4" evidence="2 13">
    <location>
        <begin position="140"/>
        <end position="158"/>
    </location>
</feature>
<feature type="repeat" description="PIR1/2/3 5" evidence="2 13">
    <location>
        <begin position="164"/>
        <end position="182"/>
    </location>
</feature>
<feature type="repeat" description="PIR1/2/3 6" evidence="2 13">
    <location>
        <begin position="188"/>
        <end position="206"/>
    </location>
</feature>
<feature type="repeat" description="PIR1/2/3 7" evidence="2 13">
    <location>
        <begin position="207"/>
        <end position="225"/>
    </location>
</feature>
<feature type="repeat" description="PIR1/2/3 8" evidence="2 13">
    <location>
        <begin position="226"/>
        <end position="244"/>
    </location>
</feature>
<feature type="repeat" description="PIR1/2/3 9" evidence="2 13">
    <location>
        <begin position="245"/>
        <end position="263"/>
    </location>
</feature>
<feature type="repeat" description="PIR1/2/3 10" evidence="2 13">
    <location>
        <begin position="264"/>
        <end position="282"/>
    </location>
</feature>
<feature type="repeat" description="PIR1/2/3 11" evidence="2 13">
    <location>
        <begin position="283"/>
        <end position="300"/>
    </location>
</feature>
<feature type="site" description="Cleavage; by KEX2">
    <location>
        <begin position="72"/>
        <end position="73"/>
    </location>
</feature>
<feature type="site" description="Covalent attachment to cell wall glycan" evidence="1">
    <location>
        <position position="81"/>
    </location>
</feature>
<feature type="site" description="Covalent attachment to cell wall glycan" evidence="1">
    <location>
        <position position="107"/>
    </location>
</feature>
<feature type="site" description="Covalent attachment to cell wall glycan" evidence="1">
    <location>
        <position position="126"/>
    </location>
</feature>
<feature type="site" description="Covalent attachment to cell wall glycan" evidence="1">
    <location>
        <position position="150"/>
    </location>
</feature>
<feature type="site" description="Covalent attachment to cell wall glycan" evidence="1">
    <location>
        <position position="174"/>
    </location>
</feature>
<feature type="site" description="Covalent attachment to cell wall glycan" evidence="1">
    <location>
        <position position="198"/>
    </location>
</feature>
<feature type="site" description="Covalent attachment to cell wall glycan" evidence="1">
    <location>
        <position position="217"/>
    </location>
</feature>
<feature type="site" description="Covalent attachment to cell wall glycan" evidence="1">
    <location>
        <position position="236"/>
    </location>
</feature>
<feature type="site" description="Covalent attachment to cell wall glycan" evidence="1">
    <location>
        <position position="255"/>
    </location>
</feature>
<feature type="site" description="Covalent attachment to cell wall glycan" evidence="1">
    <location>
        <position position="274"/>
    </location>
</feature>
<feature type="site" description="Covalent attachment to cell wall glycan" evidence="1">
    <location>
        <position position="292"/>
    </location>
</feature>
<feature type="sequence variant" description="In strain: B1, TD04/1a and TD04/1b." evidence="15">
    <original>T</original>
    <variation>S</variation>
    <location>
        <position position="96"/>
    </location>
</feature>
<feature type="sequence variant" description="In strain: B1, TD04/1a and TD04/1b." evidence="15">
    <location>
        <begin position="116"/>
        <end position="163"/>
    </location>
</feature>
<feature type="sequence variant" description="In strain: TD04/1a and TD04/1b." evidence="15">
    <original>V</original>
    <variation>I</variation>
    <location>
        <position position="175"/>
    </location>
</feature>
<feature type="sequence variant" description="In strain: TD04/1b." evidence="15">
    <original>Q</original>
    <variation>QAATTTASVSTKSSAAAVSQIGDGQIQATTKTTAAAVSQIGDGQIQ</variation>
    <location>
        <position position="176"/>
    </location>
</feature>
<feature type="sequence variant" description="In strain: B1, TD04/1a and TD04/1b." evidence="15">
    <original>V</original>
    <variation>I</variation>
    <location>
        <position position="199"/>
    </location>
</feature>
<feature type="sequence variant" description="In strain: B1, TD04/1a and TD04/1b." evidence="15">
    <location>
        <begin position="226"/>
        <end position="244"/>
    </location>
</feature>
<feature type="sequence variant" description="In strain: B1, TD04/1a and TD04/1b." evidence="15">
    <original>T</original>
    <variation>S</variation>
    <location>
        <position position="297"/>
    </location>
</feature>
<feature type="sequence conflict" description="In Ref. 3; BAA02886." evidence="18" ref="3">
    <original>G</original>
    <variation>A</variation>
    <location>
        <position position="47"/>
    </location>
</feature>
<feature type="sequence conflict" description="In Ref. 4; CAA89454." evidence="18" ref="4">
    <original>QIG</original>
    <variation>R</variation>
    <location>
        <begin position="121"/>
        <end position="123"/>
    </location>
</feature>
<feature type="sequence conflict" description="In Ref. 4; CAA89454." evidence="18" ref="4">
    <location>
        <begin position="152"/>
        <end position="175"/>
    </location>
</feature>
<feature type="sequence conflict" description="In Ref. 1; AAA17683 and 2; AAB23364." evidence="18" ref="1 2">
    <original>S</original>
    <variation>F</variation>
    <location>
        <position position="211"/>
    </location>
</feature>
<feature type="sequence conflict" description="In Ref. 1; AAA17683 and 2; AAB23364." evidence="18" ref="1 2">
    <original>Q</original>
    <variation>L</variation>
    <location>
        <position position="219"/>
    </location>
</feature>
<feature type="sequence conflict" description="In Ref. 1; AAA17683 and 2; AAB23364." evidence="18" ref="1 2">
    <original>A</original>
    <variation>R</variation>
    <location>
        <position position="226"/>
    </location>
</feature>